<sequence>MALDIHAHRILILDFGSQYTQLIARRVREIGVYCELHPFDMDDEAIREFAPKGVILAGGPESVHEANSPRCPQAVFDLGVPVFGICYGMQTMAEQLGGKVEGSELREFGYARVDVVGKSRLLDGIEDHVDADGLFGLDVWMSHGDKVTKMPEDFHILASTPSCPIAGMFNDDLRYYGVQFHPEVTHTKQGGRILSRFILDICGCEALWTPSKIAEDAIAQIRAQVGTDNVLLGLSGGVDSSVVAALLHKAIGDQLTCVFVDNGLLRLHEGEQVMAMFAENMGVKVIRANAEEQFLNNLAGEADPEKKRKIIGRTFIDVFDAESCKLENIKYLAQGTIYPDVIESAGAKSGKAHVIKSHHNVGGLPEEMNLKLVEPLRELFKDEVRRLGLELGLPYDMVYRHPFPGPGLGVRILGEVKKEYADLLRRADHIFIEELRKADWYHKVSQAFVVFQPVKSVGVVGDGRRYAWVVALRAVETIDFMTARWAHLPYELLETVSGRIINEIEGISRVTYDVSSKPPATIEWE</sequence>
<keyword id="KW-0067">ATP-binding</keyword>
<keyword id="KW-0315">Glutamine amidotransferase</keyword>
<keyword id="KW-0332">GMP biosynthesis</keyword>
<keyword id="KW-0436">Ligase</keyword>
<keyword id="KW-0547">Nucleotide-binding</keyword>
<keyword id="KW-0658">Purine biosynthesis</keyword>
<proteinExistence type="inferred from homology"/>
<feature type="chain" id="PRO_0000229457" description="GMP synthase [glutamine-hydrolyzing]">
    <location>
        <begin position="1"/>
        <end position="525"/>
    </location>
</feature>
<feature type="domain" description="Glutamine amidotransferase type-1" evidence="1">
    <location>
        <begin position="9"/>
        <end position="207"/>
    </location>
</feature>
<feature type="domain" description="GMPS ATP-PPase" evidence="1">
    <location>
        <begin position="208"/>
        <end position="400"/>
    </location>
</feature>
<feature type="active site" description="Nucleophile" evidence="1">
    <location>
        <position position="86"/>
    </location>
</feature>
<feature type="active site" evidence="1">
    <location>
        <position position="181"/>
    </location>
</feature>
<feature type="active site" evidence="1">
    <location>
        <position position="183"/>
    </location>
</feature>
<feature type="binding site" evidence="1">
    <location>
        <begin position="235"/>
        <end position="241"/>
    </location>
    <ligand>
        <name>ATP</name>
        <dbReference type="ChEBI" id="CHEBI:30616"/>
    </ligand>
</feature>
<comment type="function">
    <text evidence="1">Catalyzes the synthesis of GMP from XMP.</text>
</comment>
<comment type="catalytic activity">
    <reaction evidence="1">
        <text>XMP + L-glutamine + ATP + H2O = GMP + L-glutamate + AMP + diphosphate + 2 H(+)</text>
        <dbReference type="Rhea" id="RHEA:11680"/>
        <dbReference type="ChEBI" id="CHEBI:15377"/>
        <dbReference type="ChEBI" id="CHEBI:15378"/>
        <dbReference type="ChEBI" id="CHEBI:29985"/>
        <dbReference type="ChEBI" id="CHEBI:30616"/>
        <dbReference type="ChEBI" id="CHEBI:33019"/>
        <dbReference type="ChEBI" id="CHEBI:57464"/>
        <dbReference type="ChEBI" id="CHEBI:58115"/>
        <dbReference type="ChEBI" id="CHEBI:58359"/>
        <dbReference type="ChEBI" id="CHEBI:456215"/>
        <dbReference type="EC" id="6.3.5.2"/>
    </reaction>
</comment>
<comment type="pathway">
    <text evidence="1">Purine metabolism; GMP biosynthesis; GMP from XMP (L-Gln route): step 1/1.</text>
</comment>
<comment type="subunit">
    <text evidence="1">Homodimer.</text>
</comment>
<accession>Q4K6W4</accession>
<evidence type="ECO:0000255" key="1">
    <source>
        <dbReference type="HAMAP-Rule" id="MF_00344"/>
    </source>
</evidence>
<gene>
    <name evidence="1" type="primary">guaA</name>
    <name type="ordered locus">PFL_4939</name>
</gene>
<reference key="1">
    <citation type="journal article" date="2005" name="Nat. Biotechnol.">
        <title>Complete genome sequence of the plant commensal Pseudomonas fluorescens Pf-5.</title>
        <authorList>
            <person name="Paulsen I.T."/>
            <person name="Press C.M."/>
            <person name="Ravel J."/>
            <person name="Kobayashi D.Y."/>
            <person name="Myers G.S.A."/>
            <person name="Mavrodi D.V."/>
            <person name="DeBoy R.T."/>
            <person name="Seshadri R."/>
            <person name="Ren Q."/>
            <person name="Madupu R."/>
            <person name="Dodson R.J."/>
            <person name="Durkin A.S."/>
            <person name="Brinkac L.M."/>
            <person name="Daugherty S.C."/>
            <person name="Sullivan S.A."/>
            <person name="Rosovitz M.J."/>
            <person name="Gwinn M.L."/>
            <person name="Zhou L."/>
            <person name="Schneider D.J."/>
            <person name="Cartinhour S.W."/>
            <person name="Nelson W.C."/>
            <person name="Weidman J."/>
            <person name="Watkins K."/>
            <person name="Tran K."/>
            <person name="Khouri H."/>
            <person name="Pierson E.A."/>
            <person name="Pierson L.S. III"/>
            <person name="Thomashow L.S."/>
            <person name="Loper J.E."/>
        </authorList>
    </citation>
    <scope>NUCLEOTIDE SEQUENCE [LARGE SCALE GENOMIC DNA]</scope>
    <source>
        <strain>ATCC BAA-477 / NRRL B-23932 / Pf-5</strain>
    </source>
</reference>
<protein>
    <recommendedName>
        <fullName evidence="1">GMP synthase [glutamine-hydrolyzing]</fullName>
        <ecNumber evidence="1">6.3.5.2</ecNumber>
    </recommendedName>
    <alternativeName>
        <fullName evidence="1">GMP synthetase</fullName>
    </alternativeName>
    <alternativeName>
        <fullName evidence="1">Glutamine amidotransferase</fullName>
    </alternativeName>
</protein>
<dbReference type="EC" id="6.3.5.2" evidence="1"/>
<dbReference type="EMBL" id="CP000076">
    <property type="protein sequence ID" value="AAY94168.1"/>
    <property type="molecule type" value="Genomic_DNA"/>
</dbReference>
<dbReference type="RefSeq" id="WP_011063192.1">
    <property type="nucleotide sequence ID" value="NC_004129.6"/>
</dbReference>
<dbReference type="SMR" id="Q4K6W4"/>
<dbReference type="STRING" id="220664.PFL_4939"/>
<dbReference type="GeneID" id="57477921"/>
<dbReference type="KEGG" id="pfl:PFL_4939"/>
<dbReference type="PATRIC" id="fig|220664.5.peg.5060"/>
<dbReference type="eggNOG" id="COG0518">
    <property type="taxonomic scope" value="Bacteria"/>
</dbReference>
<dbReference type="eggNOG" id="COG0519">
    <property type="taxonomic scope" value="Bacteria"/>
</dbReference>
<dbReference type="HOGENOM" id="CLU_014340_0_5_6"/>
<dbReference type="UniPathway" id="UPA00189">
    <property type="reaction ID" value="UER00296"/>
</dbReference>
<dbReference type="Proteomes" id="UP000008540">
    <property type="component" value="Chromosome"/>
</dbReference>
<dbReference type="GO" id="GO:0005829">
    <property type="term" value="C:cytosol"/>
    <property type="evidence" value="ECO:0007669"/>
    <property type="project" value="TreeGrafter"/>
</dbReference>
<dbReference type="GO" id="GO:0005524">
    <property type="term" value="F:ATP binding"/>
    <property type="evidence" value="ECO:0007669"/>
    <property type="project" value="UniProtKB-UniRule"/>
</dbReference>
<dbReference type="GO" id="GO:0003921">
    <property type="term" value="F:GMP synthase activity"/>
    <property type="evidence" value="ECO:0007669"/>
    <property type="project" value="InterPro"/>
</dbReference>
<dbReference type="CDD" id="cd01742">
    <property type="entry name" value="GATase1_GMP_Synthase"/>
    <property type="match status" value="1"/>
</dbReference>
<dbReference type="CDD" id="cd01997">
    <property type="entry name" value="GMP_synthase_C"/>
    <property type="match status" value="1"/>
</dbReference>
<dbReference type="FunFam" id="3.30.300.10:FF:000002">
    <property type="entry name" value="GMP synthase [glutamine-hydrolyzing]"/>
    <property type="match status" value="1"/>
</dbReference>
<dbReference type="FunFam" id="3.40.50.620:FF:000001">
    <property type="entry name" value="GMP synthase [glutamine-hydrolyzing]"/>
    <property type="match status" value="1"/>
</dbReference>
<dbReference type="FunFam" id="3.40.50.880:FF:000001">
    <property type="entry name" value="GMP synthase [glutamine-hydrolyzing]"/>
    <property type="match status" value="1"/>
</dbReference>
<dbReference type="Gene3D" id="3.30.300.10">
    <property type="match status" value="1"/>
</dbReference>
<dbReference type="Gene3D" id="3.40.50.880">
    <property type="match status" value="1"/>
</dbReference>
<dbReference type="Gene3D" id="3.40.50.620">
    <property type="entry name" value="HUPs"/>
    <property type="match status" value="1"/>
</dbReference>
<dbReference type="HAMAP" id="MF_00344">
    <property type="entry name" value="GMP_synthase"/>
    <property type="match status" value="1"/>
</dbReference>
<dbReference type="InterPro" id="IPR029062">
    <property type="entry name" value="Class_I_gatase-like"/>
</dbReference>
<dbReference type="InterPro" id="IPR017926">
    <property type="entry name" value="GATASE"/>
</dbReference>
<dbReference type="InterPro" id="IPR001674">
    <property type="entry name" value="GMP_synth_C"/>
</dbReference>
<dbReference type="InterPro" id="IPR004739">
    <property type="entry name" value="GMP_synth_GATase"/>
</dbReference>
<dbReference type="InterPro" id="IPR022955">
    <property type="entry name" value="GMP_synthase"/>
</dbReference>
<dbReference type="InterPro" id="IPR025777">
    <property type="entry name" value="GMPS_ATP_PPase_dom"/>
</dbReference>
<dbReference type="InterPro" id="IPR022310">
    <property type="entry name" value="NAD/GMP_synthase"/>
</dbReference>
<dbReference type="InterPro" id="IPR014729">
    <property type="entry name" value="Rossmann-like_a/b/a_fold"/>
</dbReference>
<dbReference type="NCBIfam" id="TIGR00884">
    <property type="entry name" value="guaA_Cterm"/>
    <property type="match status" value="1"/>
</dbReference>
<dbReference type="NCBIfam" id="TIGR00888">
    <property type="entry name" value="guaA_Nterm"/>
    <property type="match status" value="1"/>
</dbReference>
<dbReference type="NCBIfam" id="NF000848">
    <property type="entry name" value="PRK00074.1"/>
    <property type="match status" value="1"/>
</dbReference>
<dbReference type="PANTHER" id="PTHR11922:SF2">
    <property type="entry name" value="GMP SYNTHASE [GLUTAMINE-HYDROLYZING]"/>
    <property type="match status" value="1"/>
</dbReference>
<dbReference type="PANTHER" id="PTHR11922">
    <property type="entry name" value="GMP SYNTHASE-RELATED"/>
    <property type="match status" value="1"/>
</dbReference>
<dbReference type="Pfam" id="PF00117">
    <property type="entry name" value="GATase"/>
    <property type="match status" value="1"/>
</dbReference>
<dbReference type="Pfam" id="PF00958">
    <property type="entry name" value="GMP_synt_C"/>
    <property type="match status" value="1"/>
</dbReference>
<dbReference type="Pfam" id="PF02540">
    <property type="entry name" value="NAD_synthase"/>
    <property type="match status" value="1"/>
</dbReference>
<dbReference type="PRINTS" id="PR00099">
    <property type="entry name" value="CPSGATASE"/>
</dbReference>
<dbReference type="PRINTS" id="PR00096">
    <property type="entry name" value="GATASE"/>
</dbReference>
<dbReference type="SUPFAM" id="SSF52402">
    <property type="entry name" value="Adenine nucleotide alpha hydrolases-like"/>
    <property type="match status" value="1"/>
</dbReference>
<dbReference type="SUPFAM" id="SSF52317">
    <property type="entry name" value="Class I glutamine amidotransferase-like"/>
    <property type="match status" value="1"/>
</dbReference>
<dbReference type="SUPFAM" id="SSF54810">
    <property type="entry name" value="GMP synthetase C-terminal dimerisation domain"/>
    <property type="match status" value="1"/>
</dbReference>
<dbReference type="PROSITE" id="PS51273">
    <property type="entry name" value="GATASE_TYPE_1"/>
    <property type="match status" value="1"/>
</dbReference>
<dbReference type="PROSITE" id="PS51553">
    <property type="entry name" value="GMPS_ATP_PPASE"/>
    <property type="match status" value="1"/>
</dbReference>
<name>GUAA_PSEF5</name>
<organism>
    <name type="scientific">Pseudomonas fluorescens (strain ATCC BAA-477 / NRRL B-23932 / Pf-5)</name>
    <dbReference type="NCBI Taxonomy" id="220664"/>
    <lineage>
        <taxon>Bacteria</taxon>
        <taxon>Pseudomonadati</taxon>
        <taxon>Pseudomonadota</taxon>
        <taxon>Gammaproteobacteria</taxon>
        <taxon>Pseudomonadales</taxon>
        <taxon>Pseudomonadaceae</taxon>
        <taxon>Pseudomonas</taxon>
    </lineage>
</organism>